<protein>
    <recommendedName>
        <fullName evidence="2">Proline-rich protein 20D</fullName>
    </recommendedName>
</protein>
<sequence length="221" mass="23262">MEEPRPSKRLRSMAPNQASGGPPPEPGCCVADPEGSVEADGPAQPAQPAKPIAYVKPFRRQPPARPESPPPAERGRRRGGSRRPGRGRGRRAGPRGDAGQRQGAEGLMAPDVHIQLDHHGEPGHQGEPEITETAAFSLSETGPPPGTVQEGPGPDVAQPELGFQEPPAAPGPQAVDWQPVLTLYPCIGFRALGDSAVLQVIQTPQGTYVQGVPVFLTDIAY</sequence>
<dbReference type="EMBL" id="AL353652">
    <property type="status" value="NOT_ANNOTATED_CDS"/>
    <property type="molecule type" value="Genomic_DNA"/>
</dbReference>
<dbReference type="CCDS" id="CCDS45055.1"/>
<dbReference type="RefSeq" id="NP_001123876.1">
    <property type="nucleotide sequence ID" value="NM_001130404.1"/>
</dbReference>
<dbReference type="RefSeq" id="NP_001123877.1">
    <property type="nucleotide sequence ID" value="NM_001130405.1"/>
</dbReference>
<dbReference type="RefSeq" id="NP_001123878.1">
    <property type="nucleotide sequence ID" value="NM_001130406.1"/>
</dbReference>
<dbReference type="RefSeq" id="NP_001123879.1">
    <property type="nucleotide sequence ID" value="NM_001130407.1"/>
</dbReference>
<dbReference type="RefSeq" id="NP_940843.1">
    <property type="nucleotide sequence ID" value="NM_198441.2"/>
</dbReference>
<dbReference type="RefSeq" id="XP_016855016.1">
    <property type="nucleotide sequence ID" value="XM_016999527.1"/>
</dbReference>
<dbReference type="BioGRID" id="125761">
    <property type="interactions" value="149"/>
</dbReference>
<dbReference type="BioGRID" id="609637">
    <property type="interactions" value="90"/>
</dbReference>
<dbReference type="BioGRID" id="609643">
    <property type="interactions" value="90"/>
</dbReference>
<dbReference type="BioGRID" id="609649">
    <property type="interactions" value="90"/>
</dbReference>
<dbReference type="BioGRID" id="609653">
    <property type="interactions" value="101"/>
</dbReference>
<dbReference type="IntAct" id="P86480">
    <property type="interactions" value="81"/>
</dbReference>
<dbReference type="iPTMnet" id="P86480"/>
<dbReference type="PhosphoSitePlus" id="P86480"/>
<dbReference type="BioMuta" id="PRR20D"/>
<dbReference type="DNASU" id="122183"/>
<dbReference type="Ensembl" id="ENST00000452123.3">
    <property type="protein sequence ID" value="ENSP00000392407.2"/>
    <property type="gene ID" value="ENSG00000227151.4"/>
</dbReference>
<dbReference type="GeneID" id="122183"/>
<dbReference type="GeneID" id="729233"/>
<dbReference type="GeneID" id="729240"/>
<dbReference type="GeneID" id="729246"/>
<dbReference type="GeneID" id="729250"/>
<dbReference type="KEGG" id="hsa:122183"/>
<dbReference type="KEGG" id="hsa:729233"/>
<dbReference type="KEGG" id="hsa:729240"/>
<dbReference type="KEGG" id="hsa:729246"/>
<dbReference type="KEGG" id="hsa:729250"/>
<dbReference type="MANE-Select" id="ENST00000452123.3">
    <property type="protein sequence ID" value="ENSP00000392407.2"/>
    <property type="RefSeq nucleotide sequence ID" value="NM_001130406.1"/>
    <property type="RefSeq protein sequence ID" value="NP_001123878.1"/>
</dbReference>
<dbReference type="AGR" id="HGNC:24754"/>
<dbReference type="AGR" id="HGNC:37220"/>
<dbReference type="AGR" id="HGNC:37221"/>
<dbReference type="AGR" id="HGNC:37222"/>
<dbReference type="AGR" id="HGNC:37223"/>
<dbReference type="CTD" id="122183"/>
<dbReference type="CTD" id="729233"/>
<dbReference type="CTD" id="729240"/>
<dbReference type="CTD" id="729246"/>
<dbReference type="CTD" id="729250"/>
<dbReference type="DisGeNET" id="122183"/>
<dbReference type="GeneCards" id="PRR20D"/>
<dbReference type="HGNC" id="HGNC:37222">
    <property type="gene designation" value="PRR20D"/>
</dbReference>
<dbReference type="HPA" id="ENSG00000227151">
    <property type="expression patterns" value="Not detected"/>
</dbReference>
<dbReference type="neXtProt" id="NX_P86480"/>
<dbReference type="OpenTargets" id="ENSG00000204919"/>
<dbReference type="PharmGKB" id="PA165505473"/>
<dbReference type="VEuPathDB" id="HostDB:ENSG00000227151"/>
<dbReference type="HOGENOM" id="CLU_117010_0_0_1"/>
<dbReference type="InParanoid" id="P86480"/>
<dbReference type="OrthoDB" id="9539181at2759"/>
<dbReference type="PAN-GO" id="P86480">
    <property type="GO annotations" value="0 GO annotations based on evolutionary models"/>
</dbReference>
<dbReference type="PhylomeDB" id="P86480"/>
<dbReference type="TreeFam" id="TF341860"/>
<dbReference type="PathwayCommons" id="P86480"/>
<dbReference type="SignaLink" id="P86480"/>
<dbReference type="BioGRID-ORCS" id="122183">
    <property type="hits" value="16 hits in 607 CRISPR screens"/>
</dbReference>
<dbReference type="BioGRID-ORCS" id="729233">
    <property type="hits" value="7 hits in 187 CRISPR screens"/>
</dbReference>
<dbReference type="BioGRID-ORCS" id="729240">
    <property type="hits" value="7 hits in 183 CRISPR screens"/>
</dbReference>
<dbReference type="BioGRID-ORCS" id="729246">
    <property type="hits" value="10 hits in 193 CRISPR screens"/>
</dbReference>
<dbReference type="BioGRID-ORCS" id="729250">
    <property type="hits" value="10 hits in 226 CRISPR screens"/>
</dbReference>
<dbReference type="Pharos" id="P86480">
    <property type="development level" value="Tdark"/>
</dbReference>
<dbReference type="PRO" id="PR:P86480"/>
<dbReference type="Proteomes" id="UP000005640">
    <property type="component" value="Chromosome 13"/>
</dbReference>
<dbReference type="RNAct" id="P86480">
    <property type="molecule type" value="protein"/>
</dbReference>
<dbReference type="Bgee" id="ENSG00000227151">
    <property type="expression patterns" value="Expressed in primordial germ cell in gonad"/>
</dbReference>
<dbReference type="GO" id="GO:0042802">
    <property type="term" value="F:identical protein binding"/>
    <property type="evidence" value="ECO:0000353"/>
    <property type="project" value="IntAct"/>
</dbReference>
<dbReference type="InterPro" id="IPR031439">
    <property type="entry name" value="PRR20"/>
</dbReference>
<dbReference type="PANTHER" id="PTHR38819">
    <property type="entry name" value="PROLINE-RICH PROTEIN 20A-RELATED"/>
    <property type="match status" value="1"/>
</dbReference>
<dbReference type="PANTHER" id="PTHR38819:SF2">
    <property type="entry name" value="PROLINE-RICH PROTEIN 20A-RELATED"/>
    <property type="match status" value="1"/>
</dbReference>
<dbReference type="Pfam" id="PF15708">
    <property type="entry name" value="PRR20"/>
    <property type="match status" value="1"/>
</dbReference>
<proteinExistence type="evidence at protein level"/>
<feature type="chain" id="PRO_0000393891" description="Proline-rich protein 20D">
    <location>
        <begin position="1"/>
        <end position="221"/>
    </location>
</feature>
<feature type="region of interest" description="Disordered" evidence="1">
    <location>
        <begin position="1"/>
        <end position="103"/>
    </location>
</feature>
<feature type="region of interest" description="Disordered" evidence="1">
    <location>
        <begin position="137"/>
        <end position="174"/>
    </location>
</feature>
<feature type="compositionally biased region" description="Low complexity" evidence="1">
    <location>
        <begin position="42"/>
        <end position="53"/>
    </location>
</feature>
<feature type="compositionally biased region" description="Pro residues" evidence="1">
    <location>
        <begin position="63"/>
        <end position="72"/>
    </location>
</feature>
<feature type="compositionally biased region" description="Basic residues" evidence="1">
    <location>
        <begin position="75"/>
        <end position="93"/>
    </location>
</feature>
<keyword id="KW-1185">Reference proteome</keyword>
<gene>
    <name evidence="3" type="primary">PRR20D</name>
</gene>
<reference evidence="2" key="1">
    <citation type="journal article" date="2004" name="Nature">
        <title>The DNA sequence and analysis of human chromosome 13.</title>
        <authorList>
            <person name="Dunham A."/>
            <person name="Matthews L.H."/>
            <person name="Burton J."/>
            <person name="Ashurst J.L."/>
            <person name="Howe K.L."/>
            <person name="Ashcroft K.J."/>
            <person name="Beare D.M."/>
            <person name="Burford D.C."/>
            <person name="Hunt S.E."/>
            <person name="Griffiths-Jones S."/>
            <person name="Jones M.C."/>
            <person name="Keenan S.J."/>
            <person name="Oliver K."/>
            <person name="Scott C.E."/>
            <person name="Ainscough R."/>
            <person name="Almeida J.P."/>
            <person name="Ambrose K.D."/>
            <person name="Andrews D.T."/>
            <person name="Ashwell R.I.S."/>
            <person name="Babbage A.K."/>
            <person name="Bagguley C.L."/>
            <person name="Bailey J."/>
            <person name="Bannerjee R."/>
            <person name="Barlow K.F."/>
            <person name="Bates K."/>
            <person name="Beasley H."/>
            <person name="Bird C.P."/>
            <person name="Bray-Allen S."/>
            <person name="Brown A.J."/>
            <person name="Brown J.Y."/>
            <person name="Burrill W."/>
            <person name="Carder C."/>
            <person name="Carter N.P."/>
            <person name="Chapman J.C."/>
            <person name="Clamp M.E."/>
            <person name="Clark S.Y."/>
            <person name="Clarke G."/>
            <person name="Clee C.M."/>
            <person name="Clegg S.C."/>
            <person name="Cobley V."/>
            <person name="Collins J.E."/>
            <person name="Corby N."/>
            <person name="Coville G.J."/>
            <person name="Deloukas P."/>
            <person name="Dhami P."/>
            <person name="Dunham I."/>
            <person name="Dunn M."/>
            <person name="Earthrowl M.E."/>
            <person name="Ellington A.G."/>
            <person name="Faulkner L."/>
            <person name="Frankish A.G."/>
            <person name="Frankland J."/>
            <person name="French L."/>
            <person name="Garner P."/>
            <person name="Garnett J."/>
            <person name="Gilbert J.G.R."/>
            <person name="Gilson C.J."/>
            <person name="Ghori J."/>
            <person name="Grafham D.V."/>
            <person name="Gribble S.M."/>
            <person name="Griffiths C."/>
            <person name="Hall R.E."/>
            <person name="Hammond S."/>
            <person name="Harley J.L."/>
            <person name="Hart E.A."/>
            <person name="Heath P.D."/>
            <person name="Howden P.J."/>
            <person name="Huckle E.J."/>
            <person name="Hunt P.J."/>
            <person name="Hunt A.R."/>
            <person name="Johnson C."/>
            <person name="Johnson D."/>
            <person name="Kay M."/>
            <person name="Kimberley A.M."/>
            <person name="King A."/>
            <person name="Laird G.K."/>
            <person name="Langford C.J."/>
            <person name="Lawlor S."/>
            <person name="Leongamornlert D.A."/>
            <person name="Lloyd D.M."/>
            <person name="Lloyd C."/>
            <person name="Loveland J.E."/>
            <person name="Lovell J."/>
            <person name="Martin S."/>
            <person name="Mashreghi-Mohammadi M."/>
            <person name="McLaren S.J."/>
            <person name="McMurray A."/>
            <person name="Milne S."/>
            <person name="Moore M.J.F."/>
            <person name="Nickerson T."/>
            <person name="Palmer S.A."/>
            <person name="Pearce A.V."/>
            <person name="Peck A.I."/>
            <person name="Pelan S."/>
            <person name="Phillimore B."/>
            <person name="Porter K.M."/>
            <person name="Rice C.M."/>
            <person name="Searle S."/>
            <person name="Sehra H.K."/>
            <person name="Shownkeen R."/>
            <person name="Skuce C.D."/>
            <person name="Smith M."/>
            <person name="Steward C.A."/>
            <person name="Sycamore N."/>
            <person name="Tester J."/>
            <person name="Thomas D.W."/>
            <person name="Tracey A."/>
            <person name="Tromans A."/>
            <person name="Tubby B."/>
            <person name="Wall M."/>
            <person name="Wallis J.M."/>
            <person name="West A.P."/>
            <person name="Whitehead S.L."/>
            <person name="Willey D.L."/>
            <person name="Wilming L."/>
            <person name="Wray P.W."/>
            <person name="Wright M.W."/>
            <person name="Young L."/>
            <person name="Coulson A."/>
            <person name="Durbin R.M."/>
            <person name="Hubbard T."/>
            <person name="Sulston J.E."/>
            <person name="Beck S."/>
            <person name="Bentley D.R."/>
            <person name="Rogers J."/>
            <person name="Ross M.T."/>
        </authorList>
    </citation>
    <scope>NUCLEOTIDE SEQUENCE [LARGE SCALE GENOMIC DNA]</scope>
</reference>
<name>PR20D_HUMAN</name>
<evidence type="ECO:0000256" key="1">
    <source>
        <dbReference type="SAM" id="MobiDB-lite"/>
    </source>
</evidence>
<evidence type="ECO:0000305" key="2"/>
<evidence type="ECO:0000312" key="3">
    <source>
        <dbReference type="HGNC" id="HGNC:37222"/>
    </source>
</evidence>
<organism>
    <name type="scientific">Homo sapiens</name>
    <name type="common">Human</name>
    <dbReference type="NCBI Taxonomy" id="9606"/>
    <lineage>
        <taxon>Eukaryota</taxon>
        <taxon>Metazoa</taxon>
        <taxon>Chordata</taxon>
        <taxon>Craniata</taxon>
        <taxon>Vertebrata</taxon>
        <taxon>Euteleostomi</taxon>
        <taxon>Mammalia</taxon>
        <taxon>Eutheria</taxon>
        <taxon>Euarchontoglires</taxon>
        <taxon>Primates</taxon>
        <taxon>Haplorrhini</taxon>
        <taxon>Catarrhini</taxon>
        <taxon>Hominidae</taxon>
        <taxon>Homo</taxon>
    </lineage>
</organism>
<comment type="interaction">
    <interactant intactId="EBI-12754095">
        <id>P86480</id>
    </interactant>
    <interactant intactId="EBI-11096309">
        <id>Q9NYB9-2</id>
        <label>ABI2</label>
    </interactant>
    <organismsDiffer>false</organismsDiffer>
    <experiments>3</experiments>
</comment>
<comment type="interaction">
    <interactant intactId="EBI-12754095">
        <id>P86480</id>
    </interactant>
    <interactant intactId="EBI-355540">
        <id>Q8IWG5</id>
        <label>ANKHD1</label>
    </interactant>
    <organismsDiffer>false</organismsDiffer>
    <experiments>3</experiments>
</comment>
<comment type="interaction">
    <interactant intactId="EBI-12754095">
        <id>P86480</id>
    </interactant>
    <interactant intactId="EBI-948603">
        <id>Q03989</id>
        <label>ARID5A</label>
    </interactant>
    <organismsDiffer>false</organismsDiffer>
    <experiments>3</experiments>
</comment>
<comment type="interaction">
    <interactant intactId="EBI-12754095">
        <id>P86480</id>
    </interactant>
    <interactant intactId="EBI-930964">
        <id>P54253</id>
        <label>ATXN1</label>
    </interactant>
    <organismsDiffer>false</organismsDiffer>
    <experiments>3</experiments>
</comment>
<comment type="interaction">
    <interactant intactId="EBI-12754095">
        <id>P86480</id>
    </interactant>
    <interactant intactId="EBI-11524452">
        <id>Q8N9N5-2</id>
        <label>BANP</label>
    </interactant>
    <organismsDiffer>false</organismsDiffer>
    <experiments>3</experiments>
</comment>
<comment type="interaction">
    <interactant intactId="EBI-12754095">
        <id>P86480</id>
    </interactant>
    <interactant intactId="EBI-954079">
        <id>Q8NDZ0</id>
        <label>BEND2</label>
    </interactant>
    <organismsDiffer>false</organismsDiffer>
    <experiments>3</experiments>
</comment>
<comment type="interaction">
    <interactant intactId="EBI-12754095">
        <id>P86480</id>
    </interactant>
    <interactant intactId="EBI-711810">
        <id>O14503</id>
        <label>BHLHE40</label>
    </interactant>
    <organismsDiffer>false</organismsDiffer>
    <experiments>3</experiments>
</comment>
<comment type="interaction">
    <interactant intactId="EBI-12754095">
        <id>P86480</id>
    </interactant>
    <interactant intactId="EBI-1012434">
        <id>Q6AI39</id>
        <label>BICRAL</label>
    </interactant>
    <organismsDiffer>false</organismsDiffer>
    <experiments>3</experiments>
</comment>
<comment type="interaction">
    <interactant intactId="EBI-12754095">
        <id>P86480</id>
    </interactant>
    <interactant intactId="EBI-12809220">
        <id>Q5SWW7</id>
        <label>C10orf55</label>
    </interactant>
    <organismsDiffer>false</organismsDiffer>
    <experiments>3</experiments>
</comment>
<comment type="interaction">
    <interactant intactId="EBI-12754095">
        <id>P86480</id>
    </interactant>
    <interactant intactId="EBI-946029">
        <id>Q6P1W5</id>
        <label>C1orf94</label>
    </interactant>
    <organismsDiffer>false</organismsDiffer>
    <experiments>3</experiments>
</comment>
<comment type="interaction">
    <interactant intactId="EBI-12754095">
        <id>P86480</id>
    </interactant>
    <interactant intactId="EBI-18036948">
        <id>Q3SXR2</id>
        <label>C3orf36</label>
    </interactant>
    <organismsDiffer>false</organismsDiffer>
    <experiments>3</experiments>
</comment>
<comment type="interaction">
    <interactant intactId="EBI-12754095">
        <id>P86480</id>
    </interactant>
    <interactant intactId="EBI-12011224">
        <id>Q9NPB3</id>
        <label>CABP2</label>
    </interactant>
    <organismsDiffer>false</organismsDiffer>
    <experiments>3</experiments>
</comment>
<comment type="interaction">
    <interactant intactId="EBI-12754095">
        <id>P86480</id>
    </interactant>
    <interactant intactId="EBI-12010594">
        <id>O75909-2</id>
        <label>CCNK</label>
    </interactant>
    <organismsDiffer>false</organismsDiffer>
    <experiments>3</experiments>
</comment>
<comment type="interaction">
    <interactant intactId="EBI-12754095">
        <id>P86480</id>
    </interactant>
    <interactant intactId="EBI-295634">
        <id>Q16543</id>
        <label>CDC37</label>
    </interactant>
    <organismsDiffer>false</organismsDiffer>
    <experiments>3</experiments>
</comment>
<comment type="interaction">
    <interactant intactId="EBI-12754095">
        <id>P86480</id>
    </interactant>
    <interactant intactId="EBI-12818201">
        <id>Q9BZC1-2</id>
        <label>CELF4</label>
    </interactant>
    <organismsDiffer>false</organismsDiffer>
    <experiments>3</experiments>
</comment>
<comment type="interaction">
    <interactant intactId="EBI-12754095">
        <id>P86480</id>
    </interactant>
    <interactant intactId="EBI-724310">
        <id>Q15038</id>
        <label>DAZAP2</label>
    </interactant>
    <organismsDiffer>false</organismsDiffer>
    <experiments>5</experiments>
</comment>
<comment type="interaction">
    <interactant intactId="EBI-12754095">
        <id>P86480</id>
    </interactant>
    <interactant intactId="EBI-9679045">
        <id>Q9NQL9</id>
        <label>DMRT3</label>
    </interactant>
    <organismsDiffer>false</organismsDiffer>
    <experiments>3</experiments>
</comment>
<comment type="interaction">
    <interactant intactId="EBI-12754095">
        <id>P86480</id>
    </interactant>
    <interactant intactId="EBI-739789">
        <id>Q92997</id>
        <label>DVL3</label>
    </interactant>
    <organismsDiffer>false</organismsDiffer>
    <experiments>3</experiments>
</comment>
<comment type="interaction">
    <interactant intactId="EBI-12754095">
        <id>P86480</id>
    </interactant>
    <interactant intactId="EBI-301024">
        <id>Q9NRA8</id>
        <label>EIF4ENIF1</label>
    </interactant>
    <organismsDiffer>false</organismsDiffer>
    <experiments>3</experiments>
</comment>
<comment type="interaction">
    <interactant intactId="EBI-12754095">
        <id>P86480</id>
    </interactant>
    <interactant intactId="EBI-10213520">
        <id>Q6NXG1</id>
        <label>ESRP1</label>
    </interactant>
    <organismsDiffer>false</organismsDiffer>
    <experiments>3</experiments>
</comment>
<comment type="interaction">
    <interactant intactId="EBI-12754095">
        <id>P86480</id>
    </interactant>
    <interactant intactId="EBI-11978259">
        <id>Q92567-2</id>
        <label>FAM168A</label>
    </interactant>
    <organismsDiffer>false</organismsDiffer>
    <experiments>3</experiments>
</comment>
<comment type="interaction">
    <interactant intactId="EBI-12754095">
        <id>P86480</id>
    </interactant>
    <interactant intactId="EBI-2807642">
        <id>Q8WU58</id>
        <label>FAM222B</label>
    </interactant>
    <organismsDiffer>false</organismsDiffer>
    <experiments>3</experiments>
</comment>
<comment type="interaction">
    <interactant intactId="EBI-12754095">
        <id>P86480</id>
    </interactant>
    <interactant intactId="EBI-8468186">
        <id>Q8IZU1</id>
        <label>FAM9A</label>
    </interactant>
    <organismsDiffer>false</organismsDiffer>
    <experiments>3</experiments>
</comment>
<comment type="interaction">
    <interactant intactId="EBI-12754095">
        <id>P86480</id>
    </interactant>
    <interactant intactId="EBI-1759806">
        <id>O75593</id>
        <label>FOXH1</label>
    </interactant>
    <organismsDiffer>false</organismsDiffer>
    <experiments>3</experiments>
</comment>
<comment type="interaction">
    <interactant intactId="EBI-12754095">
        <id>P86480</id>
    </interactant>
    <interactant intactId="EBI-983719">
        <id>Q9BZS1</id>
        <label>FOXP3</label>
    </interactant>
    <organismsDiffer>false</organismsDiffer>
    <experiments>4</experiments>
</comment>
<comment type="interaction">
    <interactant intactId="EBI-12754095">
        <id>P86480</id>
    </interactant>
    <interactant intactId="EBI-7251368">
        <id>Q9BZE0</id>
        <label>GLIS2</label>
    </interactant>
    <organismsDiffer>false</organismsDiffer>
    <experiments>3</experiments>
</comment>
<comment type="interaction">
    <interactant intactId="EBI-12754095">
        <id>P86480</id>
    </interactant>
    <interactant intactId="EBI-389518">
        <id>P52655</id>
        <label>GTF2A1</label>
    </interactant>
    <organismsDiffer>false</organismsDiffer>
    <experiments>3</experiments>
</comment>
<comment type="interaction">
    <interactant intactId="EBI-12754095">
        <id>P86480</id>
    </interactant>
    <interactant intactId="EBI-6678255">
        <id>Q14774</id>
        <label>HLX</label>
    </interactant>
    <organismsDiffer>false</organismsDiffer>
    <experiments>3</experiments>
</comment>
<comment type="interaction">
    <interactant intactId="EBI-12754095">
        <id>P86480</id>
    </interactant>
    <interactant intactId="EBI-12811111">
        <id>Q8IUB9</id>
        <label>KRTAP19-1</label>
    </interactant>
    <organismsDiffer>false</organismsDiffer>
    <experiments>3</experiments>
</comment>
<comment type="interaction">
    <interactant intactId="EBI-12754095">
        <id>P86480</id>
    </interactant>
    <interactant intactId="EBI-1048945">
        <id>Q3LI72</id>
        <label>KRTAP19-5</label>
    </interactant>
    <organismsDiffer>false</organismsDiffer>
    <experiments>3</experiments>
</comment>
<comment type="interaction">
    <interactant intactId="EBI-12754095">
        <id>P86480</id>
    </interactant>
    <interactant intactId="EBI-9088686">
        <id>Q14847-2</id>
        <label>LASP1</label>
    </interactant>
    <organismsDiffer>false</organismsDiffer>
    <experiments>3</experiments>
</comment>
<comment type="interaction">
    <interactant intactId="EBI-12754095">
        <id>P86480</id>
    </interactant>
    <interactant intactId="EBI-716006">
        <id>Q9Y5V3</id>
        <label>MAGED1</label>
    </interactant>
    <organismsDiffer>false</organismsDiffer>
    <experiments>3</experiments>
</comment>
<comment type="interaction">
    <interactant intactId="EBI-12754095">
        <id>P86480</id>
    </interactant>
    <interactant intactId="EBI-12049233">
        <id>Q9NUK0-3</id>
        <label>MBNL3</label>
    </interactant>
    <organismsDiffer>false</organismsDiffer>
    <experiments>3</experiments>
</comment>
<comment type="interaction">
    <interactant intactId="EBI-12754095">
        <id>P86480</id>
    </interactant>
    <interactant intactId="EBI-713635">
        <id>O43639</id>
        <label>NCK2</label>
    </interactant>
    <organismsDiffer>false</organismsDiffer>
    <experiments>3</experiments>
</comment>
<comment type="interaction">
    <interactant intactId="EBI-12754095">
        <id>P86480</id>
    </interactant>
    <interactant intactId="EBI-11956831">
        <id>Q13952-2</id>
        <label>NFYC</label>
    </interactant>
    <organismsDiffer>false</organismsDiffer>
    <experiments>3</experiments>
</comment>
<comment type="interaction">
    <interactant intactId="EBI-12754095">
        <id>P86480</id>
    </interactant>
    <interactant intactId="EBI-1236377">
        <id>Q9UM47</id>
        <label>NOTCH3</label>
    </interactant>
    <organismsDiffer>false</organismsDiffer>
    <experiments>3</experiments>
</comment>
<comment type="interaction">
    <interactant intactId="EBI-12754095">
        <id>P86480</id>
    </interactant>
    <interactant intactId="EBI-741158">
        <id>Q96HA8</id>
        <label>NTAQ1</label>
    </interactant>
    <organismsDiffer>false</organismsDiffer>
    <experiments>3</experiments>
</comment>
<comment type="interaction">
    <interactant intactId="EBI-12754095">
        <id>P86480</id>
    </interactant>
    <interactant intactId="EBI-12813389">
        <id>Q8TDS5</id>
        <label>OXER1</label>
    </interactant>
    <organismsDiffer>false</organismsDiffer>
    <experiments>3</experiments>
</comment>
<comment type="interaction">
    <interactant intactId="EBI-12754095">
        <id>P86480</id>
    </interactant>
    <interactant intactId="EBI-11022007">
        <id>Q9HBE1-4</id>
        <label>PATZ1</label>
    </interactant>
    <organismsDiffer>false</organismsDiffer>
    <experiments>3</experiments>
</comment>
<comment type="interaction">
    <interactant intactId="EBI-12754095">
        <id>P86480</id>
    </interactant>
    <interactant intactId="EBI-530034">
        <id>O43189</id>
        <label>PHF1</label>
    </interactant>
    <organismsDiffer>false</organismsDiffer>
    <experiments>5</experiments>
</comment>
<comment type="interaction">
    <interactant intactId="EBI-12754095">
        <id>P86480</id>
    </interactant>
    <interactant intactId="EBI-748265">
        <id>P78337</id>
        <label>PITX1</label>
    </interactant>
    <organismsDiffer>false</organismsDiffer>
    <experiments>3</experiments>
</comment>
<comment type="interaction">
    <interactant intactId="EBI-12754095">
        <id>P86480</id>
    </interactant>
    <interactant intactId="EBI-1389308">
        <id>Q7Z3K3</id>
        <label>POGZ</label>
    </interactant>
    <organismsDiffer>false</organismsDiffer>
    <experiments>3</experiments>
</comment>
<comment type="interaction">
    <interactant intactId="EBI-12754095">
        <id>P86480</id>
    </interactant>
    <interactant intactId="EBI-11526590">
        <id>P14859-6</id>
        <label>POU2F1</label>
    </interactant>
    <organismsDiffer>false</organismsDiffer>
    <experiments>3</experiments>
</comment>
<comment type="interaction">
    <interactant intactId="EBI-12754095">
        <id>P86480</id>
    </interactant>
    <interactant intactId="EBI-12029004">
        <id>P78424</id>
        <label>POU6F2</label>
    </interactant>
    <organismsDiffer>false</organismsDiffer>
    <experiments>3</experiments>
</comment>
<comment type="interaction">
    <interactant intactId="EBI-12754095">
        <id>P86480</id>
    </interactant>
    <interactant intactId="EBI-12754095">
        <id>P86480</id>
        <label>PRR20D</label>
    </interactant>
    <organismsDiffer>false</organismsDiffer>
    <experiments>3</experiments>
</comment>
<comment type="interaction">
    <interactant intactId="EBI-12754095">
        <id>P86480</id>
    </interactant>
    <interactant intactId="EBI-11959565">
        <id>Q9NV39</id>
        <label>PRR34</label>
    </interactant>
    <organismsDiffer>false</organismsDiffer>
    <experiments>6</experiments>
</comment>
<comment type="interaction">
    <interactant intactId="EBI-12754095">
        <id>P86480</id>
    </interactant>
    <interactant intactId="EBI-11986293">
        <id>P0CG20</id>
        <label>PRR35</label>
    </interactant>
    <organismsDiffer>false</organismsDiffer>
    <experiments>3</experiments>
</comment>
<comment type="interaction">
    <interactant intactId="EBI-12754095">
        <id>P86480</id>
    </interactant>
    <interactant intactId="EBI-17630019">
        <id>Q9NZH5-2</id>
        <label>PTTG2</label>
    </interactant>
    <organismsDiffer>false</organismsDiffer>
    <experiments>3</experiments>
</comment>
<comment type="interaction">
    <interactant intactId="EBI-12754095">
        <id>P86480</id>
    </interactant>
    <interactant intactId="EBI-746862">
        <id>Q9BTD8</id>
        <label>RBM42</label>
    </interactant>
    <organismsDiffer>false</organismsDiffer>
    <experiments>3</experiments>
</comment>
<comment type="interaction">
    <interactant intactId="EBI-12754095">
        <id>P86480</id>
    </interactant>
    <interactant intactId="EBI-740343">
        <id>Q93062-3</id>
        <label>RBPMS</label>
    </interactant>
    <organismsDiffer>false</organismsDiffer>
    <experiments>3</experiments>
</comment>
<comment type="interaction">
    <interactant intactId="EBI-12754095">
        <id>P86480</id>
    </interactant>
    <interactant intactId="EBI-11987469">
        <id>Q6ZRY4</id>
        <label>RBPMS2</label>
    </interactant>
    <organismsDiffer>false</organismsDiffer>
    <experiments>3</experiments>
</comment>
<comment type="interaction">
    <interactant intactId="EBI-12754095">
        <id>P86480</id>
    </interactant>
    <interactant intactId="EBI-372094">
        <id>Q9BQY4</id>
        <label>RHOXF2</label>
    </interactant>
    <organismsDiffer>false</organismsDiffer>
    <experiments>3</experiments>
</comment>
<comment type="interaction">
    <interactant intactId="EBI-12754095">
        <id>P86480</id>
    </interactant>
    <interactant intactId="EBI-10226430">
        <id>Q0D2K3</id>
        <label>RIPPLY1</label>
    </interactant>
    <organismsDiffer>false</organismsDiffer>
    <experiments>3</experiments>
</comment>
<comment type="interaction">
    <interactant intactId="EBI-12754095">
        <id>P86480</id>
    </interactant>
    <interactant intactId="EBI-2340927">
        <id>P78317</id>
        <label>RNF4</label>
    </interactant>
    <organismsDiffer>false</organismsDiffer>
    <experiments>3</experiments>
</comment>
<comment type="interaction">
    <interactant intactId="EBI-12754095">
        <id>P86480</id>
    </interactant>
    <interactant intactId="EBI-6422642">
        <id>Q01974</id>
        <label>ROR2</label>
    </interactant>
    <organismsDiffer>false</organismsDiffer>
    <experiments>3</experiments>
</comment>
<comment type="interaction">
    <interactant intactId="EBI-12754095">
        <id>P86480</id>
    </interactant>
    <interactant intactId="EBI-14067109">
        <id>Q96NU1</id>
        <label>SAMD11</label>
    </interactant>
    <organismsDiffer>false</organismsDiffer>
    <experiments>3</experiments>
</comment>
<comment type="interaction">
    <interactant intactId="EBI-12754095">
        <id>P86480</id>
    </interactant>
    <interactant intactId="EBI-11522811">
        <id>Q8IUQ4-2</id>
        <label>SIAH1</label>
    </interactant>
    <organismsDiffer>false</organismsDiffer>
    <experiments>3</experiments>
</comment>
<comment type="interaction">
    <interactant intactId="EBI-12754095">
        <id>P86480</id>
    </interactant>
    <interactant intactId="EBI-12061577">
        <id>Q8IYB5-2</id>
        <label>SMAP1</label>
    </interactant>
    <organismsDiffer>false</organismsDiffer>
    <experiments>6</experiments>
</comment>
<comment type="interaction">
    <interactant intactId="EBI-12754095">
        <id>P86480</id>
    </interactant>
    <interactant intactId="EBI-372475">
        <id>P14678-2</id>
        <label>SNRPB</label>
    </interactant>
    <organismsDiffer>false</organismsDiffer>
    <experiments>3</experiments>
</comment>
<comment type="interaction">
    <interactant intactId="EBI-12754095">
        <id>P86480</id>
    </interactant>
    <interactant intactId="EBI-766589">
        <id>P09234</id>
        <label>SNRPC</label>
    </interactant>
    <organismsDiffer>false</organismsDiffer>
    <experiments>3</experiments>
</comment>
<comment type="interaction">
    <interactant intactId="EBI-12754095">
        <id>P86480</id>
    </interactant>
    <interactant intactId="EBI-10198587">
        <id>Q02446</id>
        <label>SP4</label>
    </interactant>
    <organismsDiffer>false</organismsDiffer>
    <experiments>3</experiments>
</comment>
<comment type="interaction">
    <interactant intactId="EBI-12754095">
        <id>P86480</id>
    </interactant>
    <interactant intactId="EBI-593303">
        <id>P78362</id>
        <label>SRPK2</label>
    </interactant>
    <organismsDiffer>false</organismsDiffer>
    <experiments>3</experiments>
</comment>
<comment type="interaction">
    <interactant intactId="EBI-12754095">
        <id>P86480</id>
    </interactant>
    <interactant intactId="EBI-3452216">
        <id>O15119</id>
        <label>TBX3</label>
    </interactant>
    <organismsDiffer>false</organismsDiffer>
    <experiments>3</experiments>
</comment>
<comment type="interaction">
    <interactant intactId="EBI-12754095">
        <id>P86480</id>
    </interactant>
    <interactant intactId="EBI-2824328">
        <id>O95947</id>
        <label>TBX6</label>
    </interactant>
    <organismsDiffer>false</organismsDiffer>
    <experiments>3</experiments>
</comment>
<comment type="interaction">
    <interactant intactId="EBI-12754095">
        <id>P86480</id>
    </interactant>
    <interactant intactId="EBI-11746252">
        <id>Q9NQB0-10</id>
        <label>TCF7L2</label>
    </interactant>
    <organismsDiffer>false</organismsDiffer>
    <experiments>3</experiments>
</comment>
<comment type="interaction">
    <interactant intactId="EBI-12754095">
        <id>P86480</id>
    </interactant>
    <interactant intactId="EBI-357061">
        <id>Q92734</id>
        <label>TFG</label>
    </interactant>
    <organismsDiffer>false</organismsDiffer>
    <experiments>3</experiments>
</comment>
<comment type="interaction">
    <interactant intactId="EBI-12754095">
        <id>P86480</id>
    </interactant>
    <interactant intactId="EBI-741515">
        <id>Q9NVV9</id>
        <label>THAP1</label>
    </interactant>
    <organismsDiffer>false</organismsDiffer>
    <experiments>3</experiments>
</comment>
<comment type="interaction">
    <interactant intactId="EBI-12754095">
        <id>P86480</id>
    </interactant>
    <interactant intactId="EBI-11064654">
        <id>Q01085-2</id>
        <label>TIAL1</label>
    </interactant>
    <organismsDiffer>false</organismsDiffer>
    <experiments>3</experiments>
</comment>
<comment type="interaction">
    <interactant intactId="EBI-12754095">
        <id>P86480</id>
    </interactant>
    <interactant intactId="EBI-3939165">
        <id>O43711</id>
        <label>TLX3</label>
    </interactant>
    <organismsDiffer>false</organismsDiffer>
    <experiments>3</experiments>
</comment>
<comment type="interaction">
    <interactant intactId="EBI-12754095">
        <id>P86480</id>
    </interactant>
    <interactant intactId="EBI-74615">
        <id>Q9H0E2</id>
        <label>TOLLIP</label>
    </interactant>
    <organismsDiffer>false</organismsDiffer>
    <experiments>3</experiments>
</comment>
<comment type="interaction">
    <interactant intactId="EBI-12754095">
        <id>P86480</id>
    </interactant>
    <interactant intactId="EBI-14115717">
        <id>Q8N7U7-2</id>
        <label>TPRX1</label>
    </interactant>
    <organismsDiffer>false</organismsDiffer>
    <experiments>3</experiments>
</comment>
<comment type="interaction">
    <interactant intactId="EBI-12754095">
        <id>P86480</id>
    </interactant>
    <interactant intactId="EBI-17716262">
        <id>Q9UPQ4-2</id>
        <label>TRIM35</label>
    </interactant>
    <organismsDiffer>false</organismsDiffer>
    <experiments>3</experiments>
</comment>
<comment type="interaction">
    <interactant intactId="EBI-12754095">
        <id>P86480</id>
    </interactant>
    <interactant intactId="EBI-2107455">
        <id>Q08AM6</id>
        <label>VAC14</label>
    </interactant>
    <organismsDiffer>false</organismsDiffer>
    <experiments>3</experiments>
</comment>
<comment type="interaction">
    <interactant intactId="EBI-12754095">
        <id>P86480</id>
    </interactant>
    <interactant intactId="EBI-10191303">
        <id>O95231</id>
        <label>VENTX</label>
    </interactant>
    <organismsDiffer>false</organismsDiffer>
    <experiments>3</experiments>
</comment>
<comment type="interaction">
    <interactant intactId="EBI-12754095">
        <id>P86480</id>
    </interactant>
    <interactant intactId="EBI-11980193">
        <id>Q14119</id>
        <label>VEZF1</label>
    </interactant>
    <organismsDiffer>false</organismsDiffer>
    <experiments>3</experiments>
</comment>
<comment type="interaction">
    <interactant intactId="EBI-12754095">
        <id>P86480</id>
    </interactant>
    <interactant intactId="EBI-2559305">
        <id>A5D8V6</id>
        <label>VPS37C</label>
    </interactant>
    <organismsDiffer>false</organismsDiffer>
    <experiments>3</experiments>
</comment>
<comment type="interaction">
    <interactant intactId="EBI-12754095">
        <id>P86480</id>
    </interactant>
    <interactant intactId="EBI-10188476">
        <id>A0A0C4DGF1</id>
        <label>ZBTB32</label>
    </interactant>
    <organismsDiffer>false</organismsDiffer>
    <experiments>3</experiments>
</comment>
<comment type="interaction">
    <interactant intactId="EBI-12754095">
        <id>P86480</id>
    </interactant>
    <interactant intactId="EBI-742550">
        <id>Q96K80</id>
        <label>ZC3H10</label>
    </interactant>
    <organismsDiffer>false</organismsDiffer>
    <experiments>3</experiments>
</comment>
<comment type="interaction">
    <interactant intactId="EBI-12754095">
        <id>P86480</id>
    </interactant>
    <interactant intactId="EBI-3937908">
        <id>Q8WYQ9</id>
        <label>ZCCHC14</label>
    </interactant>
    <organismsDiffer>false</organismsDiffer>
    <experiments>3</experiments>
</comment>
<comment type="interaction">
    <interactant intactId="EBI-12754095">
        <id>P86480</id>
    </interactant>
    <interactant intactId="EBI-12055653">
        <id>Q66K41-2</id>
        <label>ZNF385C</label>
    </interactant>
    <organismsDiffer>false</organismsDiffer>
    <experiments>3</experiments>
</comment>
<comment type="interaction">
    <interactant intactId="EBI-12754095">
        <id>P86480</id>
    </interactant>
    <interactant intactId="EBI-12005952">
        <id>Q8IZ20</id>
        <label>ZNF683</label>
    </interactant>
    <organismsDiffer>false</organismsDiffer>
    <experiments>3</experiments>
</comment>
<comment type="interaction">
    <interactant intactId="EBI-12754095">
        <id>P86480</id>
    </interactant>
    <interactant intactId="EBI-18956102">
        <id>B2RDP1</id>
    </interactant>
    <organismsDiffer>false</organismsDiffer>
    <experiments>3</experiments>
</comment>
<comment type="similarity">
    <text evidence="2">Belongs to the PRR20 family.</text>
</comment>
<accession>P86480</accession>
<accession>Q8N7V5</accession>